<reference key="1">
    <citation type="journal article" date="2004" name="Science">
        <title>The Ashbya gossypii genome as a tool for mapping the ancient Saccharomyces cerevisiae genome.</title>
        <authorList>
            <person name="Dietrich F.S."/>
            <person name="Voegeli S."/>
            <person name="Brachat S."/>
            <person name="Lerch A."/>
            <person name="Gates K."/>
            <person name="Steiner S."/>
            <person name="Mohr C."/>
            <person name="Poehlmann R."/>
            <person name="Luedi P."/>
            <person name="Choi S."/>
            <person name="Wing R.A."/>
            <person name="Flavier A."/>
            <person name="Gaffney T.D."/>
            <person name="Philippsen P."/>
        </authorList>
    </citation>
    <scope>NUCLEOTIDE SEQUENCE [LARGE SCALE GENOMIC DNA]</scope>
    <source>
        <strain>ATCC 10895 / CBS 109.51 / FGSC 9923 / NRRL Y-1056</strain>
    </source>
</reference>
<reference key="2">
    <citation type="journal article" date="2013" name="G3 (Bethesda)">
        <title>Genomes of Ashbya fungi isolated from insects reveal four mating-type loci, numerous translocations, lack of transposons, and distinct gene duplications.</title>
        <authorList>
            <person name="Dietrich F.S."/>
            <person name="Voegeli S."/>
            <person name="Kuo S."/>
            <person name="Philippsen P."/>
        </authorList>
    </citation>
    <scope>GENOME REANNOTATION</scope>
    <scope>SEQUENCE REVISION TO 92</scope>
    <source>
        <strain>ATCC 10895 / CBS 109.51 / FGSC 9923 / NRRL Y-1056</strain>
    </source>
</reference>
<dbReference type="EC" id="2.1.1.360" evidence="2"/>
<dbReference type="EMBL" id="AE016818">
    <property type="protein sequence ID" value="AAS53006.2"/>
    <property type="molecule type" value="Genomic_DNA"/>
</dbReference>
<dbReference type="RefSeq" id="NP_985182.2">
    <property type="nucleotide sequence ID" value="NM_210536.2"/>
</dbReference>
<dbReference type="SMR" id="Q756E1"/>
<dbReference type="FunCoup" id="Q756E1">
    <property type="interactions" value="38"/>
</dbReference>
<dbReference type="STRING" id="284811.Q756E1"/>
<dbReference type="EnsemblFungi" id="AAS53006">
    <property type="protein sequence ID" value="AAS53006"/>
    <property type="gene ID" value="AGOS_AER326C"/>
</dbReference>
<dbReference type="GeneID" id="4621395"/>
<dbReference type="KEGG" id="ago:AGOS_AER326C"/>
<dbReference type="eggNOG" id="KOG3924">
    <property type="taxonomic scope" value="Eukaryota"/>
</dbReference>
<dbReference type="HOGENOM" id="CLU_027287_0_1_1"/>
<dbReference type="InParanoid" id="Q756E1"/>
<dbReference type="OMA" id="VFHSYAK"/>
<dbReference type="OrthoDB" id="443402at2759"/>
<dbReference type="Proteomes" id="UP000000591">
    <property type="component" value="Chromosome V"/>
</dbReference>
<dbReference type="GO" id="GO:0000781">
    <property type="term" value="C:chromosome, telomeric region"/>
    <property type="evidence" value="ECO:0007669"/>
    <property type="project" value="GOC"/>
</dbReference>
<dbReference type="GO" id="GO:0000786">
    <property type="term" value="C:nucleosome"/>
    <property type="evidence" value="ECO:0007669"/>
    <property type="project" value="InterPro"/>
</dbReference>
<dbReference type="GO" id="GO:0005634">
    <property type="term" value="C:nucleus"/>
    <property type="evidence" value="ECO:0000318"/>
    <property type="project" value="GO_Central"/>
</dbReference>
<dbReference type="GO" id="GO:0042393">
    <property type="term" value="F:histone binding"/>
    <property type="evidence" value="ECO:0007669"/>
    <property type="project" value="InterPro"/>
</dbReference>
<dbReference type="GO" id="GO:0031151">
    <property type="term" value="F:histone H3K79 methyltransferase activity"/>
    <property type="evidence" value="ECO:0000318"/>
    <property type="project" value="GO_Central"/>
</dbReference>
<dbReference type="GO" id="GO:0140956">
    <property type="term" value="F:histone H3K79 trimethyltransferase activity"/>
    <property type="evidence" value="ECO:0007669"/>
    <property type="project" value="UniProtKB-EC"/>
</dbReference>
<dbReference type="GO" id="GO:0000077">
    <property type="term" value="P:DNA damage checkpoint signaling"/>
    <property type="evidence" value="ECO:0000318"/>
    <property type="project" value="GO_Central"/>
</dbReference>
<dbReference type="GO" id="GO:0006281">
    <property type="term" value="P:DNA repair"/>
    <property type="evidence" value="ECO:0000318"/>
    <property type="project" value="GO_Central"/>
</dbReference>
<dbReference type="GO" id="GO:0070911">
    <property type="term" value="P:global genome nucleotide-excision repair"/>
    <property type="evidence" value="ECO:0007669"/>
    <property type="project" value="EnsemblFungi"/>
</dbReference>
<dbReference type="GO" id="GO:0051598">
    <property type="term" value="P:meiotic recombination checkpoint signaling"/>
    <property type="evidence" value="ECO:0007669"/>
    <property type="project" value="EnsemblFungi"/>
</dbReference>
<dbReference type="GO" id="GO:0032259">
    <property type="term" value="P:methylation"/>
    <property type="evidence" value="ECO:0007669"/>
    <property type="project" value="UniProtKB-KW"/>
</dbReference>
<dbReference type="GO" id="GO:0031571">
    <property type="term" value="P:mitotic G1 DNA damage checkpoint signaling"/>
    <property type="evidence" value="ECO:0007669"/>
    <property type="project" value="EnsemblFungi"/>
</dbReference>
<dbReference type="GO" id="GO:0031573">
    <property type="term" value="P:mitotic intra-S DNA damage checkpoint signaling"/>
    <property type="evidence" value="ECO:0007669"/>
    <property type="project" value="EnsemblFungi"/>
</dbReference>
<dbReference type="GO" id="GO:0031452">
    <property type="term" value="P:negative regulation of heterochromatin formation"/>
    <property type="evidence" value="ECO:0007669"/>
    <property type="project" value="EnsemblFungi"/>
</dbReference>
<dbReference type="GO" id="GO:0006334">
    <property type="term" value="P:nucleosome assembly"/>
    <property type="evidence" value="ECO:0007669"/>
    <property type="project" value="EnsemblFungi"/>
</dbReference>
<dbReference type="GO" id="GO:0006301">
    <property type="term" value="P:postreplication repair"/>
    <property type="evidence" value="ECO:0007669"/>
    <property type="project" value="EnsemblFungi"/>
</dbReference>
<dbReference type="GO" id="GO:0000725">
    <property type="term" value="P:recombinational repair"/>
    <property type="evidence" value="ECO:0007669"/>
    <property type="project" value="EnsemblFungi"/>
</dbReference>
<dbReference type="GO" id="GO:0031509">
    <property type="term" value="P:subtelomeric heterochromatin formation"/>
    <property type="evidence" value="ECO:0000318"/>
    <property type="project" value="GO_Central"/>
</dbReference>
<dbReference type="Gene3D" id="1.10.260.170">
    <property type="match status" value="1"/>
</dbReference>
<dbReference type="Gene3D" id="3.40.50.150">
    <property type="entry name" value="Vaccinia Virus protein VP39"/>
    <property type="match status" value="1"/>
</dbReference>
<dbReference type="InterPro" id="IPR021162">
    <property type="entry name" value="Dot1"/>
</dbReference>
<dbReference type="InterPro" id="IPR025789">
    <property type="entry name" value="DOT1_dom"/>
</dbReference>
<dbReference type="InterPro" id="IPR030445">
    <property type="entry name" value="H3-K79_meTrfase"/>
</dbReference>
<dbReference type="InterPro" id="IPR029063">
    <property type="entry name" value="SAM-dependent_MTases_sf"/>
</dbReference>
<dbReference type="PANTHER" id="PTHR21451">
    <property type="entry name" value="HISTONE H3 METHYLTRANSFERASE"/>
    <property type="match status" value="1"/>
</dbReference>
<dbReference type="PANTHER" id="PTHR21451:SF0">
    <property type="entry name" value="HISTONE-LYSINE N-METHYLTRANSFERASE, H3 LYSINE-79 SPECIFIC"/>
    <property type="match status" value="1"/>
</dbReference>
<dbReference type="Pfam" id="PF08123">
    <property type="entry name" value="DOT1"/>
    <property type="match status" value="1"/>
</dbReference>
<dbReference type="PIRSF" id="PIRSF017570">
    <property type="entry name" value="Histone_H3-K79_MeTrfase"/>
    <property type="match status" value="1"/>
</dbReference>
<dbReference type="SUPFAM" id="SSF53335">
    <property type="entry name" value="S-adenosyl-L-methionine-dependent methyltransferases"/>
    <property type="match status" value="1"/>
</dbReference>
<dbReference type="PROSITE" id="PS51569">
    <property type="entry name" value="DOT1"/>
    <property type="match status" value="1"/>
</dbReference>
<protein>
    <recommendedName>
        <fullName>Histone-lysine N-methyltransferase, H3 lysine-79 specific</fullName>
        <ecNumber evidence="2">2.1.1.360</ecNumber>
    </recommendedName>
    <alternativeName>
        <fullName>Histone H3-K79 methyltransferase</fullName>
        <shortName>H3-K79-HMTase</shortName>
    </alternativeName>
</protein>
<feature type="chain" id="PRO_0000270603" description="Histone-lysine N-methyltransferase, H3 lysine-79 specific">
    <location>
        <begin position="1"/>
        <end position="575"/>
    </location>
</feature>
<feature type="domain" description="DOT1" evidence="3">
    <location>
        <begin position="243"/>
        <end position="561"/>
    </location>
</feature>
<feature type="region of interest" description="Disordered" evidence="4">
    <location>
        <begin position="40"/>
        <end position="65"/>
    </location>
</feature>
<feature type="region of interest" description="Disordered" evidence="4">
    <location>
        <begin position="102"/>
        <end position="172"/>
    </location>
</feature>
<feature type="compositionally biased region" description="Basic and acidic residues" evidence="4">
    <location>
        <begin position="107"/>
        <end position="118"/>
    </location>
</feature>
<feature type="compositionally biased region" description="Low complexity" evidence="4">
    <location>
        <begin position="142"/>
        <end position="158"/>
    </location>
</feature>
<feature type="binding site" evidence="3">
    <location>
        <begin position="364"/>
        <end position="367"/>
    </location>
    <ligand>
        <name>S-adenosyl-L-methionine</name>
        <dbReference type="ChEBI" id="CHEBI:59789"/>
    </ligand>
</feature>
<feature type="binding site" evidence="3">
    <location>
        <begin position="387"/>
        <end position="396"/>
    </location>
    <ligand>
        <name>S-adenosyl-L-methionine</name>
        <dbReference type="ChEBI" id="CHEBI:59789"/>
    </ligand>
</feature>
<feature type="binding site" evidence="3">
    <location>
        <position position="414"/>
    </location>
    <ligand>
        <name>S-adenosyl-L-methionine</name>
        <dbReference type="ChEBI" id="CHEBI:59789"/>
    </ligand>
</feature>
<feature type="binding site" evidence="3">
    <location>
        <begin position="451"/>
        <end position="452"/>
    </location>
    <ligand>
        <name>S-adenosyl-L-methionine</name>
        <dbReference type="ChEBI" id="CHEBI:59789"/>
    </ligand>
</feature>
<accession>Q756E1</accession>
<keyword id="KW-0156">Chromatin regulator</keyword>
<keyword id="KW-0489">Methyltransferase</keyword>
<keyword id="KW-0539">Nucleus</keyword>
<keyword id="KW-1185">Reference proteome</keyword>
<keyword id="KW-0677">Repeat</keyword>
<keyword id="KW-0949">S-adenosyl-L-methionine</keyword>
<keyword id="KW-0804">Transcription</keyword>
<keyword id="KW-0805">Transcription regulation</keyword>
<keyword id="KW-0808">Transferase</keyword>
<organism>
    <name type="scientific">Eremothecium gossypii (strain ATCC 10895 / CBS 109.51 / FGSC 9923 / NRRL Y-1056)</name>
    <name type="common">Yeast</name>
    <name type="synonym">Ashbya gossypii</name>
    <dbReference type="NCBI Taxonomy" id="284811"/>
    <lineage>
        <taxon>Eukaryota</taxon>
        <taxon>Fungi</taxon>
        <taxon>Dikarya</taxon>
        <taxon>Ascomycota</taxon>
        <taxon>Saccharomycotina</taxon>
        <taxon>Saccharomycetes</taxon>
        <taxon>Saccharomycetales</taxon>
        <taxon>Saccharomycetaceae</taxon>
        <taxon>Eremothecium</taxon>
    </lineage>
</organism>
<proteinExistence type="inferred from homology"/>
<gene>
    <name type="primary">DOT1</name>
    <name type="ordered locus">AER326C</name>
</gene>
<name>DOT1_EREGS</name>
<evidence type="ECO:0000250" key="1"/>
<evidence type="ECO:0000250" key="2">
    <source>
        <dbReference type="UniProtKB" id="Q04089"/>
    </source>
</evidence>
<evidence type="ECO:0000255" key="3">
    <source>
        <dbReference type="PROSITE-ProRule" id="PRU00902"/>
    </source>
</evidence>
<evidence type="ECO:0000256" key="4">
    <source>
        <dbReference type="SAM" id="MobiDB-lite"/>
    </source>
</evidence>
<sequence length="575" mass="63800">MANNMNFVRVVANHNSQPSRHIYIKAPVTMAQTVRGADAAGNQNQNAGKGGVETTQLVGGQRPGAARKANRMLLGLLEDSARYDMKSDYSLPDTWLRKRRATAQKTAKAEDKSVDTKKTRAAGKKTKPSEAGPDAKARSGMTSAPSSSSTDAAAPAATGKARNGKARAASSVTRNTVLANASPFASPSEDVIELQHQFFRITDHQDCVNREITSSLLLTPKDVADQQIVRLHFILYPDVSEEYKVTFGHPNNGVFNPIHEIGKCIKYAVEIYFPKTFKKKGSKLLQQLSKAYASMNQSAFVEAVEQYNDLVRAIPQDQVNEHLQQTKKIPRAFIHDILQMAYSRCVLPNVNGLKEYRSFSNFVYGELLPTFLSTVYQQCDLKPGQIFIDLGSGVGNCVVQASLEYGCALSFGCEIMKNASALAKSQLKELEERCALWGVDLKPIEFSLRKSFIDNERVNELLPQCDVLLINNFIFDTKLNQAVEKLIQGLKPGCKIITLKNLRPSGYTINFDDVENILNRLKVEKFTLPEDSVSWTYRGGGEYFISTVQADIDESVFHSYAKGRVRGMRPAKYTK</sequence>
<comment type="function">
    <text evidence="2">Histone methyltransferase that specifically trimethylates histone H3 to form H3K79me3. This methylation is required for telomere silencing and for the pachytene checkpoint during the meiotic cell cycle by allowing the recruitment of RAD9 to double strand breaks. Nucleosomes are preferred as substrate compared to free histone.</text>
</comment>
<comment type="catalytic activity">
    <reaction evidence="2 3">
        <text>L-lysyl(79)-[histone H3] + 3 S-adenosyl-L-methionine = N(6),N(6),N(6)-trimethyl-L-lysyl(79)-[histone H3] + 3 S-adenosyl-L-homocysteine + 3 H(+)</text>
        <dbReference type="Rhea" id="RHEA:60328"/>
        <dbReference type="Rhea" id="RHEA-COMP:15549"/>
        <dbReference type="Rhea" id="RHEA-COMP:15552"/>
        <dbReference type="ChEBI" id="CHEBI:15378"/>
        <dbReference type="ChEBI" id="CHEBI:29969"/>
        <dbReference type="ChEBI" id="CHEBI:57856"/>
        <dbReference type="ChEBI" id="CHEBI:59789"/>
        <dbReference type="ChEBI" id="CHEBI:61961"/>
        <dbReference type="EC" id="2.1.1.360"/>
    </reaction>
</comment>
<comment type="activity regulation">
    <text evidence="1">Ubiquitination of histone H2B to form H2BK123ub1 is required for efficient DOT1 methyltransferase activity on histone H3.</text>
</comment>
<comment type="subcellular location">
    <subcellularLocation>
        <location evidence="1">Nucleus</location>
    </subcellularLocation>
</comment>
<comment type="miscellaneous">
    <text>In contrast to other lysine histone methyltransferases, it does not contain a SET domain, suggesting the existence of another mechanism for methylation of lysine residues of histones.</text>
</comment>
<comment type="similarity">
    <text evidence="3">Belongs to the class I-like SAM-binding methyltransferase superfamily. DOT1 family.</text>
</comment>